<accession>Q9SJ66</accession>
<accession>Q5XVC8</accession>
<accession>Q940K7</accession>
<accession>Q9FUW2</accession>
<feature type="chain" id="PRO_0000350614" description="Probable sucrose-phosphatase 2">
    <location>
        <begin position="1"/>
        <end position="422"/>
    </location>
</feature>
<proteinExistence type="evidence at transcript level"/>
<name>SPP2_ARATH</name>
<dbReference type="EC" id="3.1.3.24"/>
<dbReference type="EMBL" id="AC007017">
    <property type="protein sequence ID" value="AAD21473.2"/>
    <property type="molecule type" value="Genomic_DNA"/>
</dbReference>
<dbReference type="EMBL" id="CP002685">
    <property type="protein sequence ID" value="AEC09168.1"/>
    <property type="molecule type" value="Genomic_DNA"/>
</dbReference>
<dbReference type="EMBL" id="CP002685">
    <property type="protein sequence ID" value="AEC09169.1"/>
    <property type="molecule type" value="Genomic_DNA"/>
</dbReference>
<dbReference type="EMBL" id="CP002685">
    <property type="protein sequence ID" value="AEC09170.1"/>
    <property type="molecule type" value="Genomic_DNA"/>
</dbReference>
<dbReference type="EMBL" id="CP002685">
    <property type="protein sequence ID" value="ANM63145.1"/>
    <property type="molecule type" value="Genomic_DNA"/>
</dbReference>
<dbReference type="EMBL" id="AY054474">
    <property type="protein sequence ID" value="AAK96665.1"/>
    <property type="molecule type" value="mRNA"/>
</dbReference>
<dbReference type="EMBL" id="AY114634">
    <property type="protein sequence ID" value="AAM47953.1"/>
    <property type="molecule type" value="mRNA"/>
</dbReference>
<dbReference type="EMBL" id="AF283565">
    <property type="protein sequence ID" value="AAG31075.1"/>
    <property type="molecule type" value="mRNA"/>
</dbReference>
<dbReference type="EMBL" id="AY735594">
    <property type="protein sequence ID" value="AAU44464.1"/>
    <property type="molecule type" value="mRNA"/>
</dbReference>
<dbReference type="EMBL" id="AY954816">
    <property type="protein sequence ID" value="AAX55142.1"/>
    <property type="molecule type" value="mRNA"/>
</dbReference>
<dbReference type="PIR" id="F84773">
    <property type="entry name" value="F84773"/>
</dbReference>
<dbReference type="RefSeq" id="NP_001189687.1">
    <property type="nucleotide sequence ID" value="NM_001202758.1"/>
</dbReference>
<dbReference type="RefSeq" id="NP_001325253.1">
    <property type="nucleotide sequence ID" value="NM_001336575.1"/>
</dbReference>
<dbReference type="RefSeq" id="NP_565828.1">
    <property type="nucleotide sequence ID" value="NM_129143.4"/>
</dbReference>
<dbReference type="RefSeq" id="NP_973609.1">
    <property type="nucleotide sequence ID" value="NM_201880.2"/>
</dbReference>
<dbReference type="SMR" id="Q9SJ66"/>
<dbReference type="BioGRID" id="3501">
    <property type="interactions" value="2"/>
</dbReference>
<dbReference type="FunCoup" id="Q9SJ66">
    <property type="interactions" value="474"/>
</dbReference>
<dbReference type="STRING" id="3702.Q9SJ66"/>
<dbReference type="PaxDb" id="3702-AT2G35840.3"/>
<dbReference type="ProteomicsDB" id="234095"/>
<dbReference type="DNASU" id="818157"/>
<dbReference type="EnsemblPlants" id="AT2G35840.1">
    <property type="protein sequence ID" value="AT2G35840.1"/>
    <property type="gene ID" value="AT2G35840"/>
</dbReference>
<dbReference type="EnsemblPlants" id="AT2G35840.2">
    <property type="protein sequence ID" value="AT2G35840.2"/>
    <property type="gene ID" value="AT2G35840"/>
</dbReference>
<dbReference type="EnsemblPlants" id="AT2G35840.3">
    <property type="protein sequence ID" value="AT2G35840.3"/>
    <property type="gene ID" value="AT2G35840"/>
</dbReference>
<dbReference type="EnsemblPlants" id="AT2G35840.4">
    <property type="protein sequence ID" value="AT2G35840.4"/>
    <property type="gene ID" value="AT2G35840"/>
</dbReference>
<dbReference type="GeneID" id="818157"/>
<dbReference type="Gramene" id="AT2G35840.1">
    <property type="protein sequence ID" value="AT2G35840.1"/>
    <property type="gene ID" value="AT2G35840"/>
</dbReference>
<dbReference type="Gramene" id="AT2G35840.2">
    <property type="protein sequence ID" value="AT2G35840.2"/>
    <property type="gene ID" value="AT2G35840"/>
</dbReference>
<dbReference type="Gramene" id="AT2G35840.3">
    <property type="protein sequence ID" value="AT2G35840.3"/>
    <property type="gene ID" value="AT2G35840"/>
</dbReference>
<dbReference type="Gramene" id="AT2G35840.4">
    <property type="protein sequence ID" value="AT2G35840.4"/>
    <property type="gene ID" value="AT2G35840"/>
</dbReference>
<dbReference type="KEGG" id="ath:AT2G35840"/>
<dbReference type="Araport" id="AT2G35840"/>
<dbReference type="TAIR" id="AT2G35840"/>
<dbReference type="eggNOG" id="ENOG502S8I4">
    <property type="taxonomic scope" value="Eukaryota"/>
</dbReference>
<dbReference type="HOGENOM" id="CLU_030534_1_0_1"/>
<dbReference type="InParanoid" id="Q9SJ66"/>
<dbReference type="OMA" id="FNLWELE"/>
<dbReference type="OrthoDB" id="531008at2759"/>
<dbReference type="PhylomeDB" id="Q9SJ66"/>
<dbReference type="BioCyc" id="ARA:AT2G35840-MONOMER"/>
<dbReference type="BRENDA" id="3.1.3.24">
    <property type="organism ID" value="399"/>
</dbReference>
<dbReference type="UniPathway" id="UPA00371">
    <property type="reaction ID" value="UER00546"/>
</dbReference>
<dbReference type="PRO" id="PR:Q9SJ66"/>
<dbReference type="Proteomes" id="UP000006548">
    <property type="component" value="Chromosome 2"/>
</dbReference>
<dbReference type="ExpressionAtlas" id="Q9SJ66">
    <property type="expression patterns" value="baseline and differential"/>
</dbReference>
<dbReference type="GO" id="GO:0005737">
    <property type="term" value="C:cytoplasm"/>
    <property type="evidence" value="ECO:0007005"/>
    <property type="project" value="TAIR"/>
</dbReference>
<dbReference type="GO" id="GO:0005829">
    <property type="term" value="C:cytosol"/>
    <property type="evidence" value="ECO:0007005"/>
    <property type="project" value="TAIR"/>
</dbReference>
<dbReference type="GO" id="GO:0005783">
    <property type="term" value="C:endoplasmic reticulum"/>
    <property type="evidence" value="ECO:0007005"/>
    <property type="project" value="TAIR"/>
</dbReference>
<dbReference type="GO" id="GO:0005634">
    <property type="term" value="C:nucleus"/>
    <property type="evidence" value="ECO:0007005"/>
    <property type="project" value="TAIR"/>
</dbReference>
<dbReference type="GO" id="GO:0009506">
    <property type="term" value="C:plasmodesma"/>
    <property type="evidence" value="ECO:0007005"/>
    <property type="project" value="TAIR"/>
</dbReference>
<dbReference type="GO" id="GO:0000287">
    <property type="term" value="F:magnesium ion binding"/>
    <property type="evidence" value="ECO:0007669"/>
    <property type="project" value="InterPro"/>
</dbReference>
<dbReference type="GO" id="GO:0050307">
    <property type="term" value="F:sucrose-phosphate phosphatase activity"/>
    <property type="evidence" value="ECO:0007669"/>
    <property type="project" value="UniProtKB-EC"/>
</dbReference>
<dbReference type="GO" id="GO:0005986">
    <property type="term" value="P:sucrose biosynthetic process"/>
    <property type="evidence" value="ECO:0007669"/>
    <property type="project" value="UniProtKB-UniPathway"/>
</dbReference>
<dbReference type="CDD" id="cd02605">
    <property type="entry name" value="HAD_SPP"/>
    <property type="match status" value="1"/>
</dbReference>
<dbReference type="FunFam" id="3.10.450.50:FF:000029">
    <property type="entry name" value="Probable sucrose-phosphatase 2"/>
    <property type="match status" value="1"/>
</dbReference>
<dbReference type="Gene3D" id="3.10.450.50">
    <property type="match status" value="1"/>
</dbReference>
<dbReference type="Gene3D" id="3.90.1070.10">
    <property type="match status" value="1"/>
</dbReference>
<dbReference type="Gene3D" id="3.40.50.1000">
    <property type="entry name" value="HAD superfamily/HAD-like"/>
    <property type="match status" value="1"/>
</dbReference>
<dbReference type="InterPro" id="IPR036412">
    <property type="entry name" value="HAD-like_sf"/>
</dbReference>
<dbReference type="InterPro" id="IPR006379">
    <property type="entry name" value="HAD-SF_hydro_IIB"/>
</dbReference>
<dbReference type="InterPro" id="IPR023214">
    <property type="entry name" value="HAD_sf"/>
</dbReference>
<dbReference type="InterPro" id="IPR032710">
    <property type="entry name" value="NTF2-like_dom_sf"/>
</dbReference>
<dbReference type="InterPro" id="IPR006380">
    <property type="entry name" value="SPP-like_dom"/>
</dbReference>
<dbReference type="InterPro" id="IPR013679">
    <property type="entry name" value="SPP_C"/>
</dbReference>
<dbReference type="InterPro" id="IPR051518">
    <property type="entry name" value="Sucrose_Phosphatase"/>
</dbReference>
<dbReference type="InterPro" id="IPR012847">
    <property type="entry name" value="Sucrose_phosphatase_pln/cyn"/>
</dbReference>
<dbReference type="NCBIfam" id="TIGR01484">
    <property type="entry name" value="HAD-SF-IIB"/>
    <property type="match status" value="1"/>
</dbReference>
<dbReference type="NCBIfam" id="TIGR01482">
    <property type="entry name" value="SPP-subfamily"/>
    <property type="match status" value="1"/>
</dbReference>
<dbReference type="NCBIfam" id="TIGR01485">
    <property type="entry name" value="SPP_plant-cyano"/>
    <property type="match status" value="1"/>
</dbReference>
<dbReference type="PANTHER" id="PTHR46521">
    <property type="entry name" value="SUCROSE-PHOSPHATASE 2-RELATED"/>
    <property type="match status" value="1"/>
</dbReference>
<dbReference type="PANTHER" id="PTHR46521:SF4">
    <property type="entry name" value="SUCROSE-PHOSPHATASE 2-RELATED"/>
    <property type="match status" value="1"/>
</dbReference>
<dbReference type="Pfam" id="PF05116">
    <property type="entry name" value="S6PP"/>
    <property type="match status" value="1"/>
</dbReference>
<dbReference type="Pfam" id="PF08472">
    <property type="entry name" value="S6PP_C"/>
    <property type="match status" value="1"/>
</dbReference>
<dbReference type="SFLD" id="SFLDS00003">
    <property type="entry name" value="Haloacid_Dehalogenase"/>
    <property type="match status" value="1"/>
</dbReference>
<dbReference type="SFLD" id="SFLDF00043">
    <property type="entry name" value="sucrose-phosphatase"/>
    <property type="match status" value="1"/>
</dbReference>
<dbReference type="SUPFAM" id="SSF56784">
    <property type="entry name" value="HAD-like"/>
    <property type="match status" value="1"/>
</dbReference>
<dbReference type="SUPFAM" id="SSF54427">
    <property type="entry name" value="NTF2-like"/>
    <property type="match status" value="1"/>
</dbReference>
<organism>
    <name type="scientific">Arabidopsis thaliana</name>
    <name type="common">Mouse-ear cress</name>
    <dbReference type="NCBI Taxonomy" id="3702"/>
    <lineage>
        <taxon>Eukaryota</taxon>
        <taxon>Viridiplantae</taxon>
        <taxon>Streptophyta</taxon>
        <taxon>Embryophyta</taxon>
        <taxon>Tracheophyta</taxon>
        <taxon>Spermatophyta</taxon>
        <taxon>Magnoliopsida</taxon>
        <taxon>eudicotyledons</taxon>
        <taxon>Gunneridae</taxon>
        <taxon>Pentapetalae</taxon>
        <taxon>rosids</taxon>
        <taxon>malvids</taxon>
        <taxon>Brassicales</taxon>
        <taxon>Brassicaceae</taxon>
        <taxon>Camelineae</taxon>
        <taxon>Arabidopsis</taxon>
    </lineage>
</organism>
<reference key="1">
    <citation type="journal article" date="1999" name="Nature">
        <title>Sequence and analysis of chromosome 2 of the plant Arabidopsis thaliana.</title>
        <authorList>
            <person name="Lin X."/>
            <person name="Kaul S."/>
            <person name="Rounsley S.D."/>
            <person name="Shea T.P."/>
            <person name="Benito M.-I."/>
            <person name="Town C.D."/>
            <person name="Fujii C.Y."/>
            <person name="Mason T.M."/>
            <person name="Bowman C.L."/>
            <person name="Barnstead M.E."/>
            <person name="Feldblyum T.V."/>
            <person name="Buell C.R."/>
            <person name="Ketchum K.A."/>
            <person name="Lee J.J."/>
            <person name="Ronning C.M."/>
            <person name="Koo H.L."/>
            <person name="Moffat K.S."/>
            <person name="Cronin L.A."/>
            <person name="Shen M."/>
            <person name="Pai G."/>
            <person name="Van Aken S."/>
            <person name="Umayam L."/>
            <person name="Tallon L.J."/>
            <person name="Gill J.E."/>
            <person name="Adams M.D."/>
            <person name="Carrera A.J."/>
            <person name="Creasy T.H."/>
            <person name="Goodman H.M."/>
            <person name="Somerville C.R."/>
            <person name="Copenhaver G.P."/>
            <person name="Preuss D."/>
            <person name="Nierman W.C."/>
            <person name="White O."/>
            <person name="Eisen J.A."/>
            <person name="Salzberg S.L."/>
            <person name="Fraser C.M."/>
            <person name="Venter J.C."/>
        </authorList>
    </citation>
    <scope>NUCLEOTIDE SEQUENCE [LARGE SCALE GENOMIC DNA]</scope>
    <source>
        <strain>cv. Columbia</strain>
    </source>
</reference>
<reference key="2">
    <citation type="journal article" date="2017" name="Plant J.">
        <title>Araport11: a complete reannotation of the Arabidopsis thaliana reference genome.</title>
        <authorList>
            <person name="Cheng C.Y."/>
            <person name="Krishnakumar V."/>
            <person name="Chan A.P."/>
            <person name="Thibaud-Nissen F."/>
            <person name="Schobel S."/>
            <person name="Town C.D."/>
        </authorList>
    </citation>
    <scope>GENOME REANNOTATION</scope>
    <source>
        <strain>cv. Columbia</strain>
    </source>
</reference>
<reference key="3">
    <citation type="journal article" date="2003" name="Science">
        <title>Empirical analysis of transcriptional activity in the Arabidopsis genome.</title>
        <authorList>
            <person name="Yamada K."/>
            <person name="Lim J."/>
            <person name="Dale J.M."/>
            <person name="Chen H."/>
            <person name="Shinn P."/>
            <person name="Palm C.J."/>
            <person name="Southwick A.M."/>
            <person name="Wu H.C."/>
            <person name="Kim C.J."/>
            <person name="Nguyen M."/>
            <person name="Pham P.K."/>
            <person name="Cheuk R.F."/>
            <person name="Karlin-Newmann G."/>
            <person name="Liu S.X."/>
            <person name="Lam B."/>
            <person name="Sakano H."/>
            <person name="Wu T."/>
            <person name="Yu G."/>
            <person name="Miranda M."/>
            <person name="Quach H.L."/>
            <person name="Tripp M."/>
            <person name="Chang C.H."/>
            <person name="Lee J.M."/>
            <person name="Toriumi M.J."/>
            <person name="Chan M.M."/>
            <person name="Tang C.C."/>
            <person name="Onodera C.S."/>
            <person name="Deng J.M."/>
            <person name="Akiyama K."/>
            <person name="Ansari Y."/>
            <person name="Arakawa T."/>
            <person name="Banh J."/>
            <person name="Banno F."/>
            <person name="Bowser L."/>
            <person name="Brooks S.Y."/>
            <person name="Carninci P."/>
            <person name="Chao Q."/>
            <person name="Choy N."/>
            <person name="Enju A."/>
            <person name="Goldsmith A.D."/>
            <person name="Gurjal M."/>
            <person name="Hansen N.F."/>
            <person name="Hayashizaki Y."/>
            <person name="Johnson-Hopson C."/>
            <person name="Hsuan V.W."/>
            <person name="Iida K."/>
            <person name="Karnes M."/>
            <person name="Khan S."/>
            <person name="Koesema E."/>
            <person name="Ishida J."/>
            <person name="Jiang P.X."/>
            <person name="Jones T."/>
            <person name="Kawai J."/>
            <person name="Kamiya A."/>
            <person name="Meyers C."/>
            <person name="Nakajima M."/>
            <person name="Narusaka M."/>
            <person name="Seki M."/>
            <person name="Sakurai T."/>
            <person name="Satou M."/>
            <person name="Tamse R."/>
            <person name="Vaysberg M."/>
            <person name="Wallender E.K."/>
            <person name="Wong C."/>
            <person name="Yamamura Y."/>
            <person name="Yuan S."/>
            <person name="Shinozaki K."/>
            <person name="Davis R.W."/>
            <person name="Theologis A."/>
            <person name="Ecker J.R."/>
        </authorList>
    </citation>
    <scope>NUCLEOTIDE SEQUENCE [LARGE SCALE MRNA]</scope>
    <source>
        <strain>cv. Columbia</strain>
    </source>
</reference>
<reference key="4">
    <citation type="journal article" date="2000" name="Proc. Natl. Acad. Sci. U.S.A.">
        <title>Purification, molecular cloning, and sequence analysis of sucrose-6F-phosphate phosphohydrolase from plants.</title>
        <authorList>
            <person name="Lunn J.E."/>
            <person name="Ashton A.R."/>
            <person name="Hatch M.D."/>
            <person name="Heldt H.W."/>
        </authorList>
    </citation>
    <scope>NUCLEOTIDE SEQUENCE [MRNA] OF 3-422</scope>
    <source>
        <strain>cv. Columbia</strain>
    </source>
</reference>
<reference key="5">
    <citation type="submission" date="2005-03" db="EMBL/GenBank/DDBJ databases">
        <authorList>
            <person name="Underwood B.A."/>
            <person name="Xiao Y.-L."/>
            <person name="Moskal W.A. Jr."/>
            <person name="Monaghan E.L."/>
            <person name="Wang W."/>
            <person name="Redman J.C."/>
            <person name="Wu H.C."/>
            <person name="Utterback T."/>
            <person name="Town C.D."/>
        </authorList>
    </citation>
    <scope>NUCLEOTIDE SEQUENCE [LARGE SCALE MRNA] OF 165-422</scope>
    <source>
        <strain>cv. Columbia</strain>
    </source>
</reference>
<reference key="6">
    <citation type="journal article" date="2003" name="Gene">
        <title>Sucrose-phosphatase gene families in plants.</title>
        <authorList>
            <person name="Lunn J.E."/>
        </authorList>
    </citation>
    <scope>GENE FAMILY</scope>
    <scope>NOMENCLATURE</scope>
</reference>
<sequence>MERLTSPPRLMIVSDLDHTMVDHHDPENLSLLRFNSLWEHAYRHDSLLVFSTGRSPTLYKELRKEKPLLTPDITIMSVGTEITYGNSMVPDHGWVEALNNKWDLGIVKQEASNFPELKLQAETEQRPHKVSFYVEKSKAQEVTKELSQRFLKRGLDVKIIYSGGMDLDILPQGAGKGQALAYLLKKLKTEGKLPVNTLACGDSGNDAELFSIPDVYGVMVSNAQEELLKWHAENAKDNPKVIHAKERCAGGIIQAIGHFKLGPNLSPRDVSDFLEIKVENVNPGHEVVKFFLFYERWRRGEVENSEAYTASLKASVHPGGVFVHPSGTEKSLRDTIDELRKYHGDKQGKKFRVWADQVLATDTTPGTWIVKLDKWEQDGDERRCCTTTVKFTSKEGEGLVWEHVQQTWSKETMVKDDSSWII</sequence>
<evidence type="ECO:0000250" key="1"/>
<evidence type="ECO:0000305" key="2"/>
<keyword id="KW-0378">Hydrolase</keyword>
<keyword id="KW-0460">Magnesium</keyword>
<keyword id="KW-1185">Reference proteome</keyword>
<protein>
    <recommendedName>
        <fullName>Probable sucrose-phosphatase 2</fullName>
        <shortName>AtSPP2</shortName>
        <ecNumber>3.1.3.24</ecNumber>
    </recommendedName>
</protein>
<comment type="function">
    <text evidence="1">Catalyzes the final step of sucrose synthesis.</text>
</comment>
<comment type="catalytic activity">
    <reaction>
        <text>sucrose 6(F)-phosphate + H2O = sucrose + phosphate</text>
        <dbReference type="Rhea" id="RHEA:19289"/>
        <dbReference type="ChEBI" id="CHEBI:15377"/>
        <dbReference type="ChEBI" id="CHEBI:17992"/>
        <dbReference type="ChEBI" id="CHEBI:43474"/>
        <dbReference type="ChEBI" id="CHEBI:57723"/>
        <dbReference type="EC" id="3.1.3.24"/>
    </reaction>
</comment>
<comment type="cofactor">
    <cofactor evidence="1">
        <name>Mg(2+)</name>
        <dbReference type="ChEBI" id="CHEBI:18420"/>
    </cofactor>
</comment>
<comment type="pathway">
    <text>Glycan biosynthesis; sucrose biosynthesis; sucrose from D-fructose 6-phosphate and UDP-alpha-D-glucose: step 2/2.</text>
</comment>
<comment type="subunit">
    <text evidence="1">Homodimer.</text>
</comment>
<comment type="similarity">
    <text evidence="2">Belongs to the sucrose phosphatase family.</text>
</comment>
<gene>
    <name type="primary">SPP2</name>
    <name type="synonym">SPP1</name>
    <name type="ordered locus">At2g35840</name>
    <name type="ORF">F11F19.25</name>
</gene>